<protein>
    <recommendedName>
        <fullName>2',3'-cyclic-nucleotide 2'-phosphodiesterase/3'-nucleotidase</fullName>
        <ecNumber>3.1.3.6</ecNumber>
        <ecNumber>3.1.4.16</ecNumber>
    </recommendedName>
</protein>
<evidence type="ECO:0000250" key="1"/>
<evidence type="ECO:0000255" key="2"/>
<evidence type="ECO:0000305" key="3"/>
<feature type="signal peptide" evidence="2">
    <location>
        <begin position="1"/>
        <end position="24"/>
    </location>
</feature>
<feature type="chain" id="PRO_0000000038" description="2',3'-cyclic-nucleotide 2'-phosphodiesterase/3'-nucleotidase">
    <location>
        <begin position="25"/>
        <end position="652"/>
    </location>
</feature>
<feature type="binding site" evidence="1">
    <location>
        <position position="36"/>
    </location>
    <ligand>
        <name>a divalent metal cation</name>
        <dbReference type="ChEBI" id="CHEBI:60240"/>
        <label>1</label>
    </ligand>
</feature>
<feature type="binding site" evidence="1">
    <location>
        <position position="38"/>
    </location>
    <ligand>
        <name>a divalent metal cation</name>
        <dbReference type="ChEBI" id="CHEBI:60240"/>
        <label>1</label>
    </ligand>
</feature>
<feature type="binding site" evidence="1">
    <location>
        <position position="81"/>
    </location>
    <ligand>
        <name>a divalent metal cation</name>
        <dbReference type="ChEBI" id="CHEBI:60240"/>
        <label>1</label>
    </ligand>
</feature>
<feature type="binding site" evidence="1">
    <location>
        <position position="81"/>
    </location>
    <ligand>
        <name>a divalent metal cation</name>
        <dbReference type="ChEBI" id="CHEBI:60240"/>
        <label>2</label>
    </ligand>
</feature>
<feature type="binding site" evidence="1">
    <location>
        <position position="121"/>
    </location>
    <ligand>
        <name>a divalent metal cation</name>
        <dbReference type="ChEBI" id="CHEBI:60240"/>
        <label>2</label>
    </ligand>
</feature>
<feature type="binding site" evidence="1">
    <location>
        <position position="230"/>
    </location>
    <ligand>
        <name>a divalent metal cation</name>
        <dbReference type="ChEBI" id="CHEBI:60240"/>
        <label>2</label>
    </ligand>
</feature>
<feature type="binding site" evidence="1">
    <location>
        <position position="262"/>
    </location>
    <ligand>
        <name>a divalent metal cation</name>
        <dbReference type="ChEBI" id="CHEBI:60240"/>
        <label>2</label>
    </ligand>
</feature>
<feature type="binding site" evidence="1">
    <location>
        <position position="264"/>
    </location>
    <ligand>
        <name>a divalent metal cation</name>
        <dbReference type="ChEBI" id="CHEBI:60240"/>
        <label>1</label>
    </ligand>
</feature>
<feature type="binding site" evidence="1">
    <location>
        <position position="445"/>
    </location>
    <ligand>
        <name>substrate</name>
    </ligand>
</feature>
<feature type="binding site" evidence="1">
    <location>
        <begin position="549"/>
        <end position="555"/>
    </location>
    <ligand>
        <name>substrate</name>
    </ligand>
</feature>
<proteinExistence type="inferred from homology"/>
<reference key="1">
    <citation type="submission" date="1995-03" db="EMBL/GenBank/DDBJ databases">
        <authorList>
            <person name="Truelzsch K.S."/>
        </authorList>
    </citation>
    <scope>NUCLEOTIDE SEQUENCE [GENOMIC DNA]</scope>
    <source>
        <strain>ATCC 51871 / WA-314 / Serotype O:8</strain>
    </source>
</reference>
<name>CPDB_YEREN</name>
<organism>
    <name type="scientific">Yersinia enterocolitica</name>
    <dbReference type="NCBI Taxonomy" id="630"/>
    <lineage>
        <taxon>Bacteria</taxon>
        <taxon>Pseudomonadati</taxon>
        <taxon>Pseudomonadota</taxon>
        <taxon>Gammaproteobacteria</taxon>
        <taxon>Enterobacterales</taxon>
        <taxon>Yersiniaceae</taxon>
        <taxon>Yersinia</taxon>
    </lineage>
</organism>
<dbReference type="EC" id="3.1.3.6"/>
<dbReference type="EC" id="3.1.4.16"/>
<dbReference type="EMBL" id="X85742">
    <property type="protein sequence ID" value="CAA59745.1"/>
    <property type="molecule type" value="Genomic_DNA"/>
</dbReference>
<dbReference type="PIR" id="S52695">
    <property type="entry name" value="S52695"/>
</dbReference>
<dbReference type="SMR" id="P53052"/>
<dbReference type="STRING" id="1443113.LC20_04778"/>
<dbReference type="eggNOG" id="COG0737">
    <property type="taxonomic scope" value="Bacteria"/>
</dbReference>
<dbReference type="BRENDA" id="3.1.4.16">
    <property type="organism ID" value="6741"/>
</dbReference>
<dbReference type="GO" id="GO:0030288">
    <property type="term" value="C:outer membrane-bounded periplasmic space"/>
    <property type="evidence" value="ECO:0007669"/>
    <property type="project" value="TreeGrafter"/>
</dbReference>
<dbReference type="GO" id="GO:0008663">
    <property type="term" value="F:2',3'-cyclic-nucleotide 2'-phosphodiesterase activity"/>
    <property type="evidence" value="ECO:0007669"/>
    <property type="project" value="UniProtKB-EC"/>
</dbReference>
<dbReference type="GO" id="GO:0008254">
    <property type="term" value="F:3'-nucleotidase activity"/>
    <property type="evidence" value="ECO:0007669"/>
    <property type="project" value="UniProtKB-EC"/>
</dbReference>
<dbReference type="GO" id="GO:0046872">
    <property type="term" value="F:metal ion binding"/>
    <property type="evidence" value="ECO:0007669"/>
    <property type="project" value="UniProtKB-KW"/>
</dbReference>
<dbReference type="GO" id="GO:0000166">
    <property type="term" value="F:nucleotide binding"/>
    <property type="evidence" value="ECO:0007669"/>
    <property type="project" value="UniProtKB-KW"/>
</dbReference>
<dbReference type="GO" id="GO:0009166">
    <property type="term" value="P:nucleotide catabolic process"/>
    <property type="evidence" value="ECO:0007669"/>
    <property type="project" value="InterPro"/>
</dbReference>
<dbReference type="CDD" id="cd07410">
    <property type="entry name" value="MPP_CpdB_N"/>
    <property type="match status" value="1"/>
</dbReference>
<dbReference type="FunFam" id="3.60.21.10:FF:000037">
    <property type="entry name" value="Bifunctional 2',3'-cyclic-nucleotide 2'-phosphodiesterase/3'-nucleotidase"/>
    <property type="match status" value="1"/>
</dbReference>
<dbReference type="FunFam" id="3.90.780.10:FF:000002">
    <property type="entry name" value="Bifunctional 2',3'-cyclic-nucleotide 2'-phosphodiesterase/3'-nucleotidase"/>
    <property type="match status" value="1"/>
</dbReference>
<dbReference type="Gene3D" id="3.60.21.10">
    <property type="match status" value="1"/>
</dbReference>
<dbReference type="Gene3D" id="3.90.780.10">
    <property type="entry name" value="5'-Nucleotidase, C-terminal domain"/>
    <property type="match status" value="1"/>
</dbReference>
<dbReference type="InterPro" id="IPR008334">
    <property type="entry name" value="5'-Nucleotdase_C"/>
</dbReference>
<dbReference type="InterPro" id="IPR036907">
    <property type="entry name" value="5'-Nucleotdase_C_sf"/>
</dbReference>
<dbReference type="InterPro" id="IPR006146">
    <property type="entry name" value="5'-Nucleotdase_CS"/>
</dbReference>
<dbReference type="InterPro" id="IPR006179">
    <property type="entry name" value="5_nucleotidase/apyrase"/>
</dbReference>
<dbReference type="InterPro" id="IPR004843">
    <property type="entry name" value="Calcineurin-like_PHP_ApaH"/>
</dbReference>
<dbReference type="InterPro" id="IPR041827">
    <property type="entry name" value="CpdB_N"/>
</dbReference>
<dbReference type="InterPro" id="IPR006294">
    <property type="entry name" value="Cyc_nuc_PDE_nucleotidase"/>
</dbReference>
<dbReference type="InterPro" id="IPR029052">
    <property type="entry name" value="Metallo-depent_PP-like"/>
</dbReference>
<dbReference type="NCBIfam" id="TIGR01390">
    <property type="entry name" value="CycNucDiestase"/>
    <property type="match status" value="1"/>
</dbReference>
<dbReference type="NCBIfam" id="NF006938">
    <property type="entry name" value="PRK09420.1"/>
    <property type="match status" value="1"/>
</dbReference>
<dbReference type="PANTHER" id="PTHR11575:SF6">
    <property type="entry name" value="2',3'-CYCLIC-NUCLEOTIDE 2'-PHOSPHODIESTERASE_3'-NUCLEOTIDASE"/>
    <property type="match status" value="1"/>
</dbReference>
<dbReference type="PANTHER" id="PTHR11575">
    <property type="entry name" value="5'-NUCLEOTIDASE-RELATED"/>
    <property type="match status" value="1"/>
</dbReference>
<dbReference type="Pfam" id="PF02872">
    <property type="entry name" value="5_nucleotid_C"/>
    <property type="match status" value="1"/>
</dbReference>
<dbReference type="Pfam" id="PF00149">
    <property type="entry name" value="Metallophos"/>
    <property type="match status" value="1"/>
</dbReference>
<dbReference type="PRINTS" id="PR01607">
    <property type="entry name" value="APYRASEFAMLY"/>
</dbReference>
<dbReference type="SUPFAM" id="SSF55816">
    <property type="entry name" value="5'-nucleotidase (syn. UDP-sugar hydrolase), C-terminal domain"/>
    <property type="match status" value="1"/>
</dbReference>
<dbReference type="SUPFAM" id="SSF56300">
    <property type="entry name" value="Metallo-dependent phosphatases"/>
    <property type="match status" value="1"/>
</dbReference>
<dbReference type="PROSITE" id="PS00785">
    <property type="entry name" value="5_NUCLEOTIDASE_1"/>
    <property type="match status" value="1"/>
</dbReference>
<dbReference type="PROSITE" id="PS00786">
    <property type="entry name" value="5_NUCLEOTIDASE_2"/>
    <property type="match status" value="1"/>
</dbReference>
<comment type="function">
    <text evidence="1">This bifunctional enzyme catalyzes two consecutive reactions during ribonucleic acid degradation. Converts a 2',3'-cyclic nucleotide to a 3'-nucleotide and then the 3'-nucleotide to the corresponding nucleoside and phosphate (By similarity).</text>
</comment>
<comment type="catalytic activity">
    <reaction>
        <text>a nucleoside 2',3'-cyclic phosphate + H2O = a nucleoside 3'-phosphate + H(+)</text>
        <dbReference type="Rhea" id="RHEA:19621"/>
        <dbReference type="ChEBI" id="CHEBI:15377"/>
        <dbReference type="ChEBI" id="CHEBI:15378"/>
        <dbReference type="ChEBI" id="CHEBI:66949"/>
        <dbReference type="ChEBI" id="CHEBI:66954"/>
        <dbReference type="EC" id="3.1.4.16"/>
    </reaction>
</comment>
<comment type="catalytic activity">
    <reaction>
        <text>a ribonucleoside 3'-phosphate + H2O = a ribonucleoside + phosphate</text>
        <dbReference type="Rhea" id="RHEA:10144"/>
        <dbReference type="ChEBI" id="CHEBI:13197"/>
        <dbReference type="ChEBI" id="CHEBI:15377"/>
        <dbReference type="ChEBI" id="CHEBI:18254"/>
        <dbReference type="ChEBI" id="CHEBI:43474"/>
        <dbReference type="EC" id="3.1.3.6"/>
    </reaction>
</comment>
<comment type="cofactor">
    <cofactor evidence="1">
        <name>a divalent metal cation</name>
        <dbReference type="ChEBI" id="CHEBI:60240"/>
    </cofactor>
</comment>
<comment type="subcellular location">
    <subcellularLocation>
        <location>Periplasm</location>
    </subcellularLocation>
</comment>
<comment type="similarity">
    <text evidence="3">Belongs to the 5'-nucleotidase family.</text>
</comment>
<sequence>MFKRPLTLSLLASLIALTTSTAQAATVDLRVLETTDLHSNMMDFDYYKDKPTEKFGLVRTASLIEAARQQATNSVLVDNGDLIQGSPLGDYMAAKGLKAGEIHPVYKAMNTLDYAVGNIGNHEFNYGLDYLKKSLAGAKFPYVNANVIDVKTGKPLFQPYLIVDTPVKDRDGKNHNLRIGYIGFGPPQVMIWDKANLTGKVTVDDITETAKKWVPEMRKQGANLVVAIPHSGLSSDPYKTMAENSVYYLSQVPGIDAIMFGHAHAVFPSKDFATIKGADIAQGTLNGIPAVMPGQWGDHLGVVDFVLNNDQGQWQVTQAKAEARPIFDKATQKSLAAENANLMKVLAADHQGTRDFVSQPIGTASDNMYSYLSLIQDDPTVQIVNNAQRAYTEHFIQGDPDLADLPVLSAAAPFKAGGRKNDPASFVEVEKGELTFRNAADLYLYPNTLVVVKASGADVKQWLECSAAQFNQIDVNSSKPQSLINWDSFRTYNFDVIDGVNYEIDVSQPARYDGECALINDKAERIKNLTFNGKPIDPQATFLIGTNNYRAYSGKFAGTGDSHIAFASPDENRAVLSAYISAETKKHGQVTPQADNNWRLATLNSQQPLDIRFETSPSTKAAEFIKQKAQYPMKAMGTDEIGFAVFKIDLQK</sequence>
<accession>P53052</accession>
<gene>
    <name type="primary">cpdB</name>
</gene>
<keyword id="KW-0378">Hydrolase</keyword>
<keyword id="KW-0479">Metal-binding</keyword>
<keyword id="KW-0511">Multifunctional enzyme</keyword>
<keyword id="KW-0547">Nucleotide-binding</keyword>
<keyword id="KW-0574">Periplasm</keyword>
<keyword id="KW-0732">Signal</keyword>